<feature type="chain" id="PRO_0000055201" description="Probable histone H2A.3">
    <location>
        <begin position="1"/>
        <end position="131"/>
    </location>
</feature>
<feature type="region of interest" description="Disordered" evidence="2">
    <location>
        <begin position="1"/>
        <end position="23"/>
    </location>
</feature>
<feature type="compositionally biased region" description="Low complexity" evidence="2">
    <location>
        <begin position="9"/>
        <end position="23"/>
    </location>
</feature>
<feature type="sequence conflict" description="In Ref. 4; AAM67032." evidence="4" ref="4">
    <original>G</original>
    <variation>E</variation>
    <location>
        <position position="100"/>
    </location>
</feature>
<feature type="helix" evidence="5">
    <location>
        <begin position="18"/>
        <end position="23"/>
    </location>
</feature>
<feature type="helix" evidence="5">
    <location>
        <begin position="29"/>
        <end position="38"/>
    </location>
</feature>
<feature type="strand" evidence="5">
    <location>
        <begin position="43"/>
        <end position="45"/>
    </location>
</feature>
<feature type="helix" evidence="5">
    <location>
        <begin position="48"/>
        <end position="74"/>
    </location>
</feature>
<feature type="strand" evidence="5">
    <location>
        <begin position="78"/>
        <end position="80"/>
    </location>
</feature>
<feature type="helix" evidence="5">
    <location>
        <begin position="82"/>
        <end position="91"/>
    </location>
</feature>
<feature type="helix" evidence="5">
    <location>
        <begin position="93"/>
        <end position="99"/>
    </location>
</feature>
<sequence length="131" mass="13833">MAGRGKQLGSGAAKKSTSRSSKAGLQFPVGRIARFLKAGKYAERVGAGAPVYLAAVLEYLAAEVLELAGNAARDNKKTRIVPRHIQLAVRNDEELSKLLGDVTIANGGVMPNIHNLLLPKKAGSSKPTEED</sequence>
<keyword id="KW-0002">3D-structure</keyword>
<keyword id="KW-0158">Chromosome</keyword>
<keyword id="KW-0238">DNA-binding</keyword>
<keyword id="KW-0544">Nucleosome core</keyword>
<keyword id="KW-0539">Nucleus</keyword>
<keyword id="KW-1185">Reference proteome</keyword>
<protein>
    <recommendedName>
        <fullName>Probable histone H2A.3</fullName>
    </recommendedName>
    <alternativeName>
        <fullName>HTA2</fullName>
    </alternativeName>
</protein>
<proteinExistence type="evidence at protein level"/>
<dbReference type="EMBL" id="AL030978">
    <property type="protein sequence ID" value="CAA19717.1"/>
    <property type="molecule type" value="Genomic_DNA"/>
</dbReference>
<dbReference type="EMBL" id="AL161566">
    <property type="protein sequence ID" value="CAB79578.1"/>
    <property type="molecule type" value="Genomic_DNA"/>
</dbReference>
<dbReference type="EMBL" id="CP002687">
    <property type="protein sequence ID" value="AEE85313.1"/>
    <property type="molecule type" value="Genomic_DNA"/>
</dbReference>
<dbReference type="EMBL" id="CP002687">
    <property type="protein sequence ID" value="AEE85314.1"/>
    <property type="molecule type" value="Genomic_DNA"/>
</dbReference>
<dbReference type="EMBL" id="BT005779">
    <property type="protein sequence ID" value="AAO64183.1"/>
    <property type="molecule type" value="mRNA"/>
</dbReference>
<dbReference type="EMBL" id="BT006076">
    <property type="protein sequence ID" value="AAP04061.1"/>
    <property type="molecule type" value="mRNA"/>
</dbReference>
<dbReference type="EMBL" id="AY088714">
    <property type="protein sequence ID" value="AAM67032.1"/>
    <property type="molecule type" value="mRNA"/>
</dbReference>
<dbReference type="PIR" id="T05747">
    <property type="entry name" value="T05747"/>
</dbReference>
<dbReference type="RefSeq" id="NP_001190852.1">
    <property type="nucleotide sequence ID" value="NM_001203923.1"/>
</dbReference>
<dbReference type="RefSeq" id="NP_194453.1">
    <property type="nucleotide sequence ID" value="NM_118857.4"/>
</dbReference>
<dbReference type="PDB" id="6M2M">
    <property type="method" value="X-ray"/>
    <property type="resolution" value="2.85 A"/>
    <property type="chains" value="A/C/E/G/I/K=14-106"/>
</dbReference>
<dbReference type="PDBsum" id="6M2M"/>
<dbReference type="SMR" id="O81826"/>
<dbReference type="BioGRID" id="14118">
    <property type="interactions" value="7"/>
</dbReference>
<dbReference type="FunCoup" id="O81826">
    <property type="interactions" value="2164"/>
</dbReference>
<dbReference type="IntAct" id="O81826">
    <property type="interactions" value="4"/>
</dbReference>
<dbReference type="STRING" id="3702.O81826"/>
<dbReference type="PaxDb" id="3702-AT4G27230.1"/>
<dbReference type="ProteomicsDB" id="247281"/>
<dbReference type="EnsemblPlants" id="AT4G27230.1">
    <property type="protein sequence ID" value="AT4G27230.1"/>
    <property type="gene ID" value="AT4G27230"/>
</dbReference>
<dbReference type="EnsemblPlants" id="AT4G27230.2">
    <property type="protein sequence ID" value="AT4G27230.2"/>
    <property type="gene ID" value="AT4G27230"/>
</dbReference>
<dbReference type="GeneID" id="828831"/>
<dbReference type="Gramene" id="AT4G27230.1">
    <property type="protein sequence ID" value="AT4G27230.1"/>
    <property type="gene ID" value="AT4G27230"/>
</dbReference>
<dbReference type="Gramene" id="AT4G27230.2">
    <property type="protein sequence ID" value="AT4G27230.2"/>
    <property type="gene ID" value="AT4G27230"/>
</dbReference>
<dbReference type="KEGG" id="ath:AT4G27230"/>
<dbReference type="Araport" id="AT4G27230"/>
<dbReference type="TAIR" id="AT4G27230">
    <property type="gene designation" value="HTA2"/>
</dbReference>
<dbReference type="eggNOG" id="KOG1756">
    <property type="taxonomic scope" value="Eukaryota"/>
</dbReference>
<dbReference type="HOGENOM" id="CLU_062828_3_0_1"/>
<dbReference type="InParanoid" id="O81826"/>
<dbReference type="OMA" id="CALESQH"/>
<dbReference type="OrthoDB" id="9421954at2759"/>
<dbReference type="PhylomeDB" id="O81826"/>
<dbReference type="PRO" id="PR:O81826"/>
<dbReference type="Proteomes" id="UP000006548">
    <property type="component" value="Chromosome 4"/>
</dbReference>
<dbReference type="ExpressionAtlas" id="O81826">
    <property type="expression patterns" value="baseline and differential"/>
</dbReference>
<dbReference type="GO" id="GO:0005829">
    <property type="term" value="C:cytosol"/>
    <property type="evidence" value="ECO:0007005"/>
    <property type="project" value="TAIR"/>
</dbReference>
<dbReference type="GO" id="GO:0000786">
    <property type="term" value="C:nucleosome"/>
    <property type="evidence" value="ECO:0007669"/>
    <property type="project" value="UniProtKB-KW"/>
</dbReference>
<dbReference type="GO" id="GO:0005634">
    <property type="term" value="C:nucleus"/>
    <property type="evidence" value="ECO:0000314"/>
    <property type="project" value="TAIR"/>
</dbReference>
<dbReference type="GO" id="GO:0003677">
    <property type="term" value="F:DNA binding"/>
    <property type="evidence" value="ECO:0007669"/>
    <property type="project" value="UniProtKB-KW"/>
</dbReference>
<dbReference type="GO" id="GO:0046982">
    <property type="term" value="F:protein heterodimerization activity"/>
    <property type="evidence" value="ECO:0007669"/>
    <property type="project" value="InterPro"/>
</dbReference>
<dbReference type="GO" id="GO:0030527">
    <property type="term" value="F:structural constituent of chromatin"/>
    <property type="evidence" value="ECO:0007669"/>
    <property type="project" value="InterPro"/>
</dbReference>
<dbReference type="CDD" id="cd00074">
    <property type="entry name" value="HFD_H2A"/>
    <property type="match status" value="1"/>
</dbReference>
<dbReference type="FunFam" id="1.10.20.10:FF:000009">
    <property type="entry name" value="Histone H2A"/>
    <property type="match status" value="1"/>
</dbReference>
<dbReference type="Gene3D" id="1.10.20.10">
    <property type="entry name" value="Histone, subunit A"/>
    <property type="match status" value="1"/>
</dbReference>
<dbReference type="InterPro" id="IPR009072">
    <property type="entry name" value="Histone-fold"/>
</dbReference>
<dbReference type="InterPro" id="IPR002119">
    <property type="entry name" value="Histone_H2A"/>
</dbReference>
<dbReference type="InterPro" id="IPR007125">
    <property type="entry name" value="Histone_H2A/H2B/H3"/>
</dbReference>
<dbReference type="InterPro" id="IPR032454">
    <property type="entry name" value="Histone_H2A_C"/>
</dbReference>
<dbReference type="InterPro" id="IPR032458">
    <property type="entry name" value="Histone_H2A_CS"/>
</dbReference>
<dbReference type="PANTHER" id="PTHR23430">
    <property type="entry name" value="HISTONE H2A"/>
    <property type="match status" value="1"/>
</dbReference>
<dbReference type="Pfam" id="PF00125">
    <property type="entry name" value="Histone"/>
    <property type="match status" value="1"/>
</dbReference>
<dbReference type="Pfam" id="PF16211">
    <property type="entry name" value="Histone_H2A_C"/>
    <property type="match status" value="1"/>
</dbReference>
<dbReference type="PRINTS" id="PR00620">
    <property type="entry name" value="HISTONEH2A"/>
</dbReference>
<dbReference type="SMART" id="SM00414">
    <property type="entry name" value="H2A"/>
    <property type="match status" value="1"/>
</dbReference>
<dbReference type="SUPFAM" id="SSF47113">
    <property type="entry name" value="Histone-fold"/>
    <property type="match status" value="1"/>
</dbReference>
<dbReference type="PROSITE" id="PS00046">
    <property type="entry name" value="HISTONE_H2A"/>
    <property type="match status" value="1"/>
</dbReference>
<evidence type="ECO:0000250" key="1"/>
<evidence type="ECO:0000256" key="2">
    <source>
        <dbReference type="SAM" id="MobiDB-lite"/>
    </source>
</evidence>
<evidence type="ECO:0000269" key="3">
    <source>
    </source>
</evidence>
<evidence type="ECO:0000305" key="4"/>
<evidence type="ECO:0007829" key="5">
    <source>
        <dbReference type="PDB" id="6M2M"/>
    </source>
</evidence>
<name>H2A3_ARATH</name>
<gene>
    <name type="ordered locus">At4g27230</name>
    <name type="ORF">M4I22.40</name>
</gene>
<comment type="function">
    <text>Core component of nucleosome. Nucleosomes wrap and compact DNA into chromatin, limiting DNA accessibility to the cellular machineries which require DNA as a template. Histones thereby play a central role in transcription regulation, DNA repair, DNA replication and chromosomal stability. DNA accessibility is regulated via a complex set of post-translational modifications of histones, also called histone code, and nucleosome remodeling.</text>
</comment>
<comment type="subunit">
    <text>The nucleosome is a histone octamer containing two molecules each of H2A, H2B, H3 and H4 assembled in one H3-H4 heterotetramer and two H2A-H2B heterodimers. The octamer wraps approximately 147 bp of DNA.</text>
</comment>
<comment type="subcellular location">
    <subcellularLocation>
        <location evidence="1">Nucleus</location>
    </subcellularLocation>
    <subcellularLocation>
        <location evidence="1">Chromosome</location>
    </subcellularLocation>
</comment>
<comment type="tissue specificity">
    <text evidence="3">Expressed in meristems and dividing cells.</text>
</comment>
<comment type="PTM">
    <text>Not ubiquitinated.</text>
</comment>
<comment type="similarity">
    <text evidence="4">Belongs to the histone H2A family.</text>
</comment>
<reference key="1">
    <citation type="journal article" date="1999" name="Nature">
        <title>Sequence and analysis of chromosome 4 of the plant Arabidopsis thaliana.</title>
        <authorList>
            <person name="Mayer K.F.X."/>
            <person name="Schueller C."/>
            <person name="Wambutt R."/>
            <person name="Murphy G."/>
            <person name="Volckaert G."/>
            <person name="Pohl T."/>
            <person name="Duesterhoeft A."/>
            <person name="Stiekema W."/>
            <person name="Entian K.-D."/>
            <person name="Terryn N."/>
            <person name="Harris B."/>
            <person name="Ansorge W."/>
            <person name="Brandt P."/>
            <person name="Grivell L.A."/>
            <person name="Rieger M."/>
            <person name="Weichselgartner M."/>
            <person name="de Simone V."/>
            <person name="Obermaier B."/>
            <person name="Mache R."/>
            <person name="Mueller M."/>
            <person name="Kreis M."/>
            <person name="Delseny M."/>
            <person name="Puigdomenech P."/>
            <person name="Watson M."/>
            <person name="Schmidtheini T."/>
            <person name="Reichert B."/>
            <person name="Portetelle D."/>
            <person name="Perez-Alonso M."/>
            <person name="Boutry M."/>
            <person name="Bancroft I."/>
            <person name="Vos P."/>
            <person name="Hoheisel J."/>
            <person name="Zimmermann W."/>
            <person name="Wedler H."/>
            <person name="Ridley P."/>
            <person name="Langham S.-A."/>
            <person name="McCullagh B."/>
            <person name="Bilham L."/>
            <person name="Robben J."/>
            <person name="van der Schueren J."/>
            <person name="Grymonprez B."/>
            <person name="Chuang Y.-J."/>
            <person name="Vandenbussche F."/>
            <person name="Braeken M."/>
            <person name="Weltjens I."/>
            <person name="Voet M."/>
            <person name="Bastiaens I."/>
            <person name="Aert R."/>
            <person name="Defoor E."/>
            <person name="Weitzenegger T."/>
            <person name="Bothe G."/>
            <person name="Ramsperger U."/>
            <person name="Hilbert H."/>
            <person name="Braun M."/>
            <person name="Holzer E."/>
            <person name="Brandt A."/>
            <person name="Peters S."/>
            <person name="van Staveren M."/>
            <person name="Dirkse W."/>
            <person name="Mooijman P."/>
            <person name="Klein Lankhorst R."/>
            <person name="Rose M."/>
            <person name="Hauf J."/>
            <person name="Koetter P."/>
            <person name="Berneiser S."/>
            <person name="Hempel S."/>
            <person name="Feldpausch M."/>
            <person name="Lamberth S."/>
            <person name="Van den Daele H."/>
            <person name="De Keyser A."/>
            <person name="Buysshaert C."/>
            <person name="Gielen J."/>
            <person name="Villarroel R."/>
            <person name="De Clercq R."/>
            <person name="van Montagu M."/>
            <person name="Rogers J."/>
            <person name="Cronin A."/>
            <person name="Quail M.A."/>
            <person name="Bray-Allen S."/>
            <person name="Clark L."/>
            <person name="Doggett J."/>
            <person name="Hall S."/>
            <person name="Kay M."/>
            <person name="Lennard N."/>
            <person name="McLay K."/>
            <person name="Mayes R."/>
            <person name="Pettett A."/>
            <person name="Rajandream M.A."/>
            <person name="Lyne M."/>
            <person name="Benes V."/>
            <person name="Rechmann S."/>
            <person name="Borkova D."/>
            <person name="Bloecker H."/>
            <person name="Scharfe M."/>
            <person name="Grimm M."/>
            <person name="Loehnert T.-H."/>
            <person name="Dose S."/>
            <person name="de Haan M."/>
            <person name="Maarse A.C."/>
            <person name="Schaefer M."/>
            <person name="Mueller-Auer S."/>
            <person name="Gabel C."/>
            <person name="Fuchs M."/>
            <person name="Fartmann B."/>
            <person name="Granderath K."/>
            <person name="Dauner D."/>
            <person name="Herzl A."/>
            <person name="Neumann S."/>
            <person name="Argiriou A."/>
            <person name="Vitale D."/>
            <person name="Liguori R."/>
            <person name="Piravandi E."/>
            <person name="Massenet O."/>
            <person name="Quigley F."/>
            <person name="Clabauld G."/>
            <person name="Muendlein A."/>
            <person name="Felber R."/>
            <person name="Schnabl S."/>
            <person name="Hiller R."/>
            <person name="Schmidt W."/>
            <person name="Lecharny A."/>
            <person name="Aubourg S."/>
            <person name="Chefdor F."/>
            <person name="Cooke R."/>
            <person name="Berger C."/>
            <person name="Monfort A."/>
            <person name="Casacuberta E."/>
            <person name="Gibbons T."/>
            <person name="Weber N."/>
            <person name="Vandenbol M."/>
            <person name="Bargues M."/>
            <person name="Terol J."/>
            <person name="Torres A."/>
            <person name="Perez-Perez A."/>
            <person name="Purnelle B."/>
            <person name="Bent E."/>
            <person name="Johnson S."/>
            <person name="Tacon D."/>
            <person name="Jesse T."/>
            <person name="Heijnen L."/>
            <person name="Schwarz S."/>
            <person name="Scholler P."/>
            <person name="Heber S."/>
            <person name="Francs P."/>
            <person name="Bielke C."/>
            <person name="Frishman D."/>
            <person name="Haase D."/>
            <person name="Lemcke K."/>
            <person name="Mewes H.-W."/>
            <person name="Stocker S."/>
            <person name="Zaccaria P."/>
            <person name="Bevan M."/>
            <person name="Wilson R.K."/>
            <person name="de la Bastide M."/>
            <person name="Habermann K."/>
            <person name="Parnell L."/>
            <person name="Dedhia N."/>
            <person name="Gnoj L."/>
            <person name="Schutz K."/>
            <person name="Huang E."/>
            <person name="Spiegel L."/>
            <person name="Sekhon M."/>
            <person name="Murray J."/>
            <person name="Sheet P."/>
            <person name="Cordes M."/>
            <person name="Abu-Threideh J."/>
            <person name="Stoneking T."/>
            <person name="Kalicki J."/>
            <person name="Graves T."/>
            <person name="Harmon G."/>
            <person name="Edwards J."/>
            <person name="Latreille P."/>
            <person name="Courtney L."/>
            <person name="Cloud J."/>
            <person name="Abbott A."/>
            <person name="Scott K."/>
            <person name="Johnson D."/>
            <person name="Minx P."/>
            <person name="Bentley D."/>
            <person name="Fulton B."/>
            <person name="Miller N."/>
            <person name="Greco T."/>
            <person name="Kemp K."/>
            <person name="Kramer J."/>
            <person name="Fulton L."/>
            <person name="Mardis E."/>
            <person name="Dante M."/>
            <person name="Pepin K."/>
            <person name="Hillier L.W."/>
            <person name="Nelson J."/>
            <person name="Spieth J."/>
            <person name="Ryan E."/>
            <person name="Andrews S."/>
            <person name="Geisel C."/>
            <person name="Layman D."/>
            <person name="Du H."/>
            <person name="Ali J."/>
            <person name="Berghoff A."/>
            <person name="Jones K."/>
            <person name="Drone K."/>
            <person name="Cotton M."/>
            <person name="Joshu C."/>
            <person name="Antonoiu B."/>
            <person name="Zidanic M."/>
            <person name="Strong C."/>
            <person name="Sun H."/>
            <person name="Lamar B."/>
            <person name="Yordan C."/>
            <person name="Ma P."/>
            <person name="Zhong J."/>
            <person name="Preston R."/>
            <person name="Vil D."/>
            <person name="Shekher M."/>
            <person name="Matero A."/>
            <person name="Shah R."/>
            <person name="Swaby I.K."/>
            <person name="O'Shaughnessy A."/>
            <person name="Rodriguez M."/>
            <person name="Hoffman J."/>
            <person name="Till S."/>
            <person name="Granat S."/>
            <person name="Shohdy N."/>
            <person name="Hasegawa A."/>
            <person name="Hameed A."/>
            <person name="Lodhi M."/>
            <person name="Johnson A."/>
            <person name="Chen E."/>
            <person name="Marra M.A."/>
            <person name="Martienssen R."/>
            <person name="McCombie W.R."/>
        </authorList>
    </citation>
    <scope>NUCLEOTIDE SEQUENCE [LARGE SCALE GENOMIC DNA]</scope>
    <source>
        <strain>cv. Columbia</strain>
    </source>
</reference>
<reference key="2">
    <citation type="journal article" date="2017" name="Plant J.">
        <title>Araport11: a complete reannotation of the Arabidopsis thaliana reference genome.</title>
        <authorList>
            <person name="Cheng C.Y."/>
            <person name="Krishnakumar V."/>
            <person name="Chan A.P."/>
            <person name="Thibaud-Nissen F."/>
            <person name="Schobel S."/>
            <person name="Town C.D."/>
        </authorList>
    </citation>
    <scope>GENOME REANNOTATION</scope>
    <source>
        <strain>cv. Columbia</strain>
    </source>
</reference>
<reference key="3">
    <citation type="journal article" date="2003" name="Science">
        <title>Empirical analysis of transcriptional activity in the Arabidopsis genome.</title>
        <authorList>
            <person name="Yamada K."/>
            <person name="Lim J."/>
            <person name="Dale J.M."/>
            <person name="Chen H."/>
            <person name="Shinn P."/>
            <person name="Palm C.J."/>
            <person name="Southwick A.M."/>
            <person name="Wu H.C."/>
            <person name="Kim C.J."/>
            <person name="Nguyen M."/>
            <person name="Pham P.K."/>
            <person name="Cheuk R.F."/>
            <person name="Karlin-Newmann G."/>
            <person name="Liu S.X."/>
            <person name="Lam B."/>
            <person name="Sakano H."/>
            <person name="Wu T."/>
            <person name="Yu G."/>
            <person name="Miranda M."/>
            <person name="Quach H.L."/>
            <person name="Tripp M."/>
            <person name="Chang C.H."/>
            <person name="Lee J.M."/>
            <person name="Toriumi M.J."/>
            <person name="Chan M.M."/>
            <person name="Tang C.C."/>
            <person name="Onodera C.S."/>
            <person name="Deng J.M."/>
            <person name="Akiyama K."/>
            <person name="Ansari Y."/>
            <person name="Arakawa T."/>
            <person name="Banh J."/>
            <person name="Banno F."/>
            <person name="Bowser L."/>
            <person name="Brooks S.Y."/>
            <person name="Carninci P."/>
            <person name="Chao Q."/>
            <person name="Choy N."/>
            <person name="Enju A."/>
            <person name="Goldsmith A.D."/>
            <person name="Gurjal M."/>
            <person name="Hansen N.F."/>
            <person name="Hayashizaki Y."/>
            <person name="Johnson-Hopson C."/>
            <person name="Hsuan V.W."/>
            <person name="Iida K."/>
            <person name="Karnes M."/>
            <person name="Khan S."/>
            <person name="Koesema E."/>
            <person name="Ishida J."/>
            <person name="Jiang P.X."/>
            <person name="Jones T."/>
            <person name="Kawai J."/>
            <person name="Kamiya A."/>
            <person name="Meyers C."/>
            <person name="Nakajima M."/>
            <person name="Narusaka M."/>
            <person name="Seki M."/>
            <person name="Sakurai T."/>
            <person name="Satou M."/>
            <person name="Tamse R."/>
            <person name="Vaysberg M."/>
            <person name="Wallender E.K."/>
            <person name="Wong C."/>
            <person name="Yamamura Y."/>
            <person name="Yuan S."/>
            <person name="Shinozaki K."/>
            <person name="Davis R.W."/>
            <person name="Theologis A."/>
            <person name="Ecker J.R."/>
        </authorList>
    </citation>
    <scope>NUCLEOTIDE SEQUENCE [LARGE SCALE MRNA]</scope>
    <source>
        <strain>cv. Columbia</strain>
    </source>
</reference>
<reference key="4">
    <citation type="submission" date="2002-03" db="EMBL/GenBank/DDBJ databases">
        <title>Full-length cDNA from Arabidopsis thaliana.</title>
        <authorList>
            <person name="Brover V.V."/>
            <person name="Troukhan M.E."/>
            <person name="Alexandrov N.A."/>
            <person name="Lu Y.-P."/>
            <person name="Flavell R.B."/>
            <person name="Feldmann K.A."/>
        </authorList>
    </citation>
    <scope>NUCLEOTIDE SEQUENCE [LARGE SCALE MRNA]</scope>
</reference>
<reference key="5">
    <citation type="journal article" date="2006" name="Plant Cell">
        <title>Constitutive expression exposes functional redundancy between the Arabidopsis histone H2A gene HTA1 and other H2A gene family members.</title>
        <authorList>
            <person name="Yi H."/>
            <person name="Sardesai N."/>
            <person name="Fujinuma T."/>
            <person name="Chan C.-W."/>
            <person name="Veena X."/>
            <person name="Gelvin S.B."/>
        </authorList>
    </citation>
    <scope>TISSUE SPECIFICITY</scope>
    <scope>NOMENCLATURE</scope>
</reference>
<reference key="6">
    <citation type="journal article" date="2007" name="Nature">
        <title>Control of DNA methylation and heterochromatic silencing by histone H2B deubiquitination.</title>
        <authorList>
            <person name="Sridhar V.V."/>
            <person name="Kapoor A."/>
            <person name="Zhang K."/>
            <person name="Zhu J."/>
            <person name="Zhou T."/>
            <person name="Hasegawa P.M."/>
            <person name="Bressan R.A."/>
            <person name="Zhu J.-K."/>
        </authorList>
    </citation>
    <scope>LACK OF UBIQUITINATION</scope>
    <scope>IDENTIFICATION BY MASS SPECTROMETRY</scope>
</reference>
<organism>
    <name type="scientific">Arabidopsis thaliana</name>
    <name type="common">Mouse-ear cress</name>
    <dbReference type="NCBI Taxonomy" id="3702"/>
    <lineage>
        <taxon>Eukaryota</taxon>
        <taxon>Viridiplantae</taxon>
        <taxon>Streptophyta</taxon>
        <taxon>Embryophyta</taxon>
        <taxon>Tracheophyta</taxon>
        <taxon>Spermatophyta</taxon>
        <taxon>Magnoliopsida</taxon>
        <taxon>eudicotyledons</taxon>
        <taxon>Gunneridae</taxon>
        <taxon>Pentapetalae</taxon>
        <taxon>rosids</taxon>
        <taxon>malvids</taxon>
        <taxon>Brassicales</taxon>
        <taxon>Brassicaceae</taxon>
        <taxon>Camelineae</taxon>
        <taxon>Arabidopsis</taxon>
    </lineage>
</organism>
<accession>O81826</accession>
<accession>Q8L8Z9</accession>